<evidence type="ECO:0000255" key="1"/>
<evidence type="ECO:0000256" key="2">
    <source>
        <dbReference type="SAM" id="MobiDB-lite"/>
    </source>
</evidence>
<evidence type="ECO:0000269" key="3">
    <source>
    </source>
</evidence>
<evidence type="ECO:0000269" key="4">
    <source>
    </source>
</evidence>
<evidence type="ECO:0000269" key="5">
    <source>
    </source>
</evidence>
<evidence type="ECO:0000269" key="6">
    <source>
    </source>
</evidence>
<evidence type="ECO:0000269" key="7">
    <source>
    </source>
</evidence>
<evidence type="ECO:0000303" key="8">
    <source>
    </source>
</evidence>
<evidence type="ECO:0000305" key="9"/>
<sequence>MATMYSAAVEVISKETIKPTTPTPSQLKNFNLSLLDQCFPLYYYVPIILFYPATAANSTGSSNHHDDLDLLKSSLSKTLVHFYPMAGRMIDNILVDCHDQGINFYKVKIRGKMCEFMSQPDVPLSQLLPSEVVSASVPKEALVIVQVNMFDCGGTAICSSVSHKIADAATMSTFIRSWASTTKTSRSGGSTAAVTDQKLIPSFDSASLFPPSERLTSPSGMSEIPFSSTPEDTEDDKTVSKRFVFDFAKITSVREKLQVLMHDNYKSRRQTRVEVVTSLIWKSVMKSTPAGFLPVVHHAVNLRKKMDPPLQDVSFGNLSVTVSAFLPATTTTTTNAVNKTINSTSSESQVVLHELHDFIAQMRSEIDKVKGDKGSLEKVIQNFASGHDASIKKINDVEVINFWISSWCRMGLYEIDFGWGKPIWVTVDPNIKPNKNCFFMNDTKCGEGIEVWASFLEDDMAKFELHLSEILELI</sequence>
<organism>
    <name type="scientific">Papaver somniferum</name>
    <name type="common">Opium poppy</name>
    <dbReference type="NCBI Taxonomy" id="3469"/>
    <lineage>
        <taxon>Eukaryota</taxon>
        <taxon>Viridiplantae</taxon>
        <taxon>Streptophyta</taxon>
        <taxon>Embryophyta</taxon>
        <taxon>Tracheophyta</taxon>
        <taxon>Spermatophyta</taxon>
        <taxon>Magnoliopsida</taxon>
        <taxon>Ranunculales</taxon>
        <taxon>Papaveraceae</taxon>
        <taxon>Papaveroideae</taxon>
        <taxon>Papaver</taxon>
    </lineage>
</organism>
<gene>
    <name evidence="8" type="primary">SALAT</name>
</gene>
<dbReference type="EC" id="2.3.1.150" evidence="3 7"/>
<dbReference type="EMBL" id="AF339913">
    <property type="protein sequence ID" value="AAK73661.1"/>
    <property type="molecule type" value="mRNA"/>
</dbReference>
<dbReference type="SMR" id="Q94FT4"/>
<dbReference type="KEGG" id="ag:AAK73661"/>
<dbReference type="BioCyc" id="MetaCyc:MONOMER-12301"/>
<dbReference type="BRENDA" id="2.3.1.150">
    <property type="organism ID" value="4515"/>
</dbReference>
<dbReference type="UniPathway" id="UPA00852"/>
<dbReference type="PRO" id="PR:Q94FT4"/>
<dbReference type="GO" id="GO:0047180">
    <property type="term" value="F:salutaridinol 7-O-acetyltransferase activity"/>
    <property type="evidence" value="ECO:0007669"/>
    <property type="project" value="UniProtKB-EC"/>
</dbReference>
<dbReference type="GO" id="GO:0009820">
    <property type="term" value="P:alkaloid metabolic process"/>
    <property type="evidence" value="ECO:0007669"/>
    <property type="project" value="UniProtKB-KW"/>
</dbReference>
<dbReference type="Gene3D" id="3.30.559.10">
    <property type="entry name" value="Chloramphenicol acetyltransferase-like domain"/>
    <property type="match status" value="2"/>
</dbReference>
<dbReference type="InterPro" id="IPR023213">
    <property type="entry name" value="CAT-like_dom_sf"/>
</dbReference>
<dbReference type="PANTHER" id="PTHR31623">
    <property type="entry name" value="F21J9.9"/>
    <property type="match status" value="1"/>
</dbReference>
<dbReference type="PANTHER" id="PTHR31623:SF17">
    <property type="entry name" value="F21J9.9"/>
    <property type="match status" value="1"/>
</dbReference>
<dbReference type="Pfam" id="PF02458">
    <property type="entry name" value="Transferase"/>
    <property type="match status" value="1"/>
</dbReference>
<proteinExistence type="evidence at protein level"/>
<reference key="1">
    <citation type="journal article" date="2001" name="J. Biol. Chem.">
        <title>Molecular characterization of the salutaridinol 7-O-acetyltransferase involved in morphine biosynthesis in Opium poppy Papaver somniferum.</title>
        <authorList>
            <person name="Grothe T."/>
            <person name="Lenz R."/>
            <person name="Kutchan T.M."/>
        </authorList>
    </citation>
    <scope>NUCLEOTIDE SEQUENCE [MRNA]</scope>
    <scope>PROTEIN SEQUENCE OF 14-30; 241-244; 257-272; 287-313; 340-362 AND 378-394</scope>
    <scope>FUNCTION</scope>
    <scope>CATALYTIC ACTIVITY</scope>
    <scope>BIOPHYSICOCHEMICAL PROPERTIES</scope>
    <scope>TISSUE SPECIFICITY</scope>
</reference>
<reference key="2">
    <citation type="journal article" date="1995" name="J. Biol. Chem.">
        <title>Acetyl coenzyme A:salutaridinol-7-O-acetyltransferase from Papaver somniferum plant cell cultures. The enzyme catalyzing the formation of thebaine in morphine biosynthesis.</title>
        <authorList>
            <person name="Lenz R."/>
            <person name="Zenk M.H."/>
        </authorList>
    </citation>
    <scope>CATALYTIC ACTIVITY</scope>
</reference>
<reference key="3">
    <citation type="journal article" date="2006" name="Plant J.">
        <title>The role of phloem sieve elements and laticifers in the biosynthesis and accumulation of alkaloids in opium poppy.</title>
        <authorList>
            <person name="Samanani N."/>
            <person name="Alcantara J."/>
            <person name="Bourgault R."/>
            <person name="Zulak K.G."/>
            <person name="Facchini P.J."/>
        </authorList>
    </citation>
    <scope>TISSUE SPECIFICITY</scope>
    <scope>DEVELOPMENTAL STAGE</scope>
    <source>
        <strain>cv. Marianne</strain>
    </source>
</reference>
<reference key="4">
    <citation type="journal article" date="2012" name="Plant J.">
        <title>Systematic knockdown of morphine pathway enzymes in opium poppy using virus-induced gene silencing.</title>
        <authorList>
            <person name="Wijekoon C.P."/>
            <person name="Facchini P.J."/>
        </authorList>
    </citation>
    <scope>FUNCTION</scope>
    <scope>DISRUPTION PHENOTYPE</scope>
    <scope>CATALYTIC ACTIVITY</scope>
</reference>
<reference key="5">
    <citation type="journal article" date="2018" name="J. Biosci.">
        <title>Spatiotemporal oscillations of morphinan alkaloids in opium poppy.</title>
        <authorList>
            <person name="Rezaei M."/>
            <person name="Naghavi M.R."/>
            <person name="Hosseinzadeh A."/>
            <person name="Abasi A."/>
            <person name="Nasiri J."/>
        </authorList>
    </citation>
    <scope>TISSUE SPECIFICITY</scope>
    <scope>DEVELOPMENTAL STAGE</scope>
</reference>
<protein>
    <recommendedName>
        <fullName evidence="8">Salutaridinol 7-O-acetyltransferase</fullName>
        <shortName evidence="8">salAT</shortName>
        <ecNumber evidence="3 7">2.3.1.150</ecNumber>
    </recommendedName>
</protein>
<comment type="function">
    <text evidence="3 5">Acetyltransferase involved in biosynthesis of morphinan-type benzylisoquinoline and opiate alkaloids natural products (PubMed:22098111). Catalyzes the conversion of the phenanthrene alkaloid salutaridinol to salutaridinol-7-O-acetate, the immediate precursor of thebaine along the morphine biosynthetic pathway (PubMed:22098111). Conversion of 7-O-acetylsalutaridinol into thebaine is spontaneous.</text>
</comment>
<comment type="catalytic activity">
    <reaction evidence="3 5 7">
        <text>(7S)-salutaridinol + acetyl-CoA = (7S)-O-acetylsalutaridinol + CoA</text>
        <dbReference type="Rhea" id="RHEA:22856"/>
        <dbReference type="ChEBI" id="CHEBI:57287"/>
        <dbReference type="ChEBI" id="CHEBI:57288"/>
        <dbReference type="ChEBI" id="CHEBI:57672"/>
        <dbReference type="ChEBI" id="CHEBI:58463"/>
        <dbReference type="EC" id="2.3.1.150"/>
    </reaction>
</comment>
<comment type="biophysicochemical properties">
    <kinetics>
        <KM evidence="3">9 uM for salutaridinol</KM>
        <KM evidence="3">54 uM for acetyl-CoA</KM>
        <Vmax evidence="3">25.0 pmol/sec/mg enzyme</Vmax>
    </kinetics>
    <phDependence>
        <text evidence="3">Optimum pH is 7-9.</text>
    </phDependence>
    <temperatureDependence>
        <text evidence="3">Optimum temperature is 47 degrees Celsius.</text>
    </temperatureDependence>
</comment>
<comment type="pathway">
    <text>Alkaloid biosynthesis; morphine biosynthesis.</text>
</comment>
<comment type="tissue specificity">
    <text evidence="3 4 6">Expressed in root, stem, leaf and capsule of the mature plant (PubMed:11404355, PubMed:16813579, PubMed:29872026). Restricted to sieve elements of the phloem adjacent or proximal to laticifers (PubMed:16813579).</text>
</comment>
<comment type="developmental stage">
    <text evidence="4 6">Increases rapidly between 1 and 3 days after seed germination (PubMed:16813579). In leaves, detected mainly at the budding time (PubMed:29872026). Accumulates in roots, especially during flowering (PubMed:29872026). Expressed constitutively in stems (PubMed:29872026). In capsule walls and contents, present only at the flowering stage (PubMed:29872026).</text>
</comment>
<comment type="disruption phenotype">
    <text evidence="5">Accumulation of upstream metabolites, such as salutaridine, but reduced production of morphine.</text>
</comment>
<comment type="similarity">
    <text evidence="9">Belongs to the plant acyltransferase family.</text>
</comment>
<keyword id="KW-0012">Acyltransferase</keyword>
<keyword id="KW-0017">Alkaloid metabolism</keyword>
<keyword id="KW-0903">Direct protein sequencing</keyword>
<keyword id="KW-0808">Transferase</keyword>
<accession>Q94FT4</accession>
<feature type="chain" id="PRO_0000147366" description="Salutaridinol 7-O-acetyltransferase">
    <location>
        <begin position="1"/>
        <end position="474"/>
    </location>
</feature>
<feature type="region of interest" description="Disordered" evidence="2">
    <location>
        <begin position="213"/>
        <end position="234"/>
    </location>
</feature>
<feature type="compositionally biased region" description="Polar residues" evidence="2">
    <location>
        <begin position="214"/>
        <end position="230"/>
    </location>
</feature>
<feature type="active site" description="Proton acceptor" evidence="1">
    <location>
        <position position="163"/>
    </location>
</feature>
<feature type="active site" description="Proton acceptor" evidence="1">
    <location>
        <position position="416"/>
    </location>
</feature>
<name>SALAT_PAPSO</name>